<feature type="chain" id="PRO_0000340784" description="3-hydroxyacyl-[acyl-carrier-protein] dehydratase FabZ">
    <location>
        <begin position="1"/>
        <end position="153"/>
    </location>
</feature>
<feature type="active site" evidence="1">
    <location>
        <position position="53"/>
    </location>
</feature>
<dbReference type="EC" id="4.2.1.59" evidence="1"/>
<dbReference type="EMBL" id="AM180252">
    <property type="protein sequence ID" value="CAJ55074.1"/>
    <property type="molecule type" value="Genomic_DNA"/>
</dbReference>
<dbReference type="RefSeq" id="WP_011527103.1">
    <property type="nucleotide sequence ID" value="NC_008011.1"/>
</dbReference>
<dbReference type="SMR" id="Q1MPK3"/>
<dbReference type="STRING" id="363253.LI1020"/>
<dbReference type="KEGG" id="lip:LI1020"/>
<dbReference type="eggNOG" id="COG0764">
    <property type="taxonomic scope" value="Bacteria"/>
</dbReference>
<dbReference type="HOGENOM" id="CLU_078912_1_0_7"/>
<dbReference type="OrthoDB" id="9772788at2"/>
<dbReference type="Proteomes" id="UP000002430">
    <property type="component" value="Chromosome"/>
</dbReference>
<dbReference type="GO" id="GO:0005737">
    <property type="term" value="C:cytoplasm"/>
    <property type="evidence" value="ECO:0007669"/>
    <property type="project" value="UniProtKB-SubCell"/>
</dbReference>
<dbReference type="GO" id="GO:0016020">
    <property type="term" value="C:membrane"/>
    <property type="evidence" value="ECO:0007669"/>
    <property type="project" value="GOC"/>
</dbReference>
<dbReference type="GO" id="GO:0019171">
    <property type="term" value="F:(3R)-hydroxyacyl-[acyl-carrier-protein] dehydratase activity"/>
    <property type="evidence" value="ECO:0007669"/>
    <property type="project" value="UniProtKB-EC"/>
</dbReference>
<dbReference type="GO" id="GO:0006633">
    <property type="term" value="P:fatty acid biosynthetic process"/>
    <property type="evidence" value="ECO:0007669"/>
    <property type="project" value="UniProtKB-UniRule"/>
</dbReference>
<dbReference type="GO" id="GO:0009245">
    <property type="term" value="P:lipid A biosynthetic process"/>
    <property type="evidence" value="ECO:0007669"/>
    <property type="project" value="UniProtKB-UniRule"/>
</dbReference>
<dbReference type="CDD" id="cd01288">
    <property type="entry name" value="FabZ"/>
    <property type="match status" value="1"/>
</dbReference>
<dbReference type="FunFam" id="3.10.129.10:FF:000001">
    <property type="entry name" value="3-hydroxyacyl-[acyl-carrier-protein] dehydratase FabZ"/>
    <property type="match status" value="1"/>
</dbReference>
<dbReference type="Gene3D" id="3.10.129.10">
    <property type="entry name" value="Hotdog Thioesterase"/>
    <property type="match status" value="1"/>
</dbReference>
<dbReference type="HAMAP" id="MF_00406">
    <property type="entry name" value="FabZ"/>
    <property type="match status" value="1"/>
</dbReference>
<dbReference type="InterPro" id="IPR013114">
    <property type="entry name" value="FabA_FabZ"/>
</dbReference>
<dbReference type="InterPro" id="IPR010084">
    <property type="entry name" value="FabZ"/>
</dbReference>
<dbReference type="InterPro" id="IPR029069">
    <property type="entry name" value="HotDog_dom_sf"/>
</dbReference>
<dbReference type="NCBIfam" id="TIGR01750">
    <property type="entry name" value="fabZ"/>
    <property type="match status" value="1"/>
</dbReference>
<dbReference type="NCBIfam" id="NF000582">
    <property type="entry name" value="PRK00006.1"/>
    <property type="match status" value="1"/>
</dbReference>
<dbReference type="PANTHER" id="PTHR30272">
    <property type="entry name" value="3-HYDROXYACYL-[ACYL-CARRIER-PROTEIN] DEHYDRATASE"/>
    <property type="match status" value="1"/>
</dbReference>
<dbReference type="PANTHER" id="PTHR30272:SF1">
    <property type="entry name" value="3-HYDROXYACYL-[ACYL-CARRIER-PROTEIN] DEHYDRATASE"/>
    <property type="match status" value="1"/>
</dbReference>
<dbReference type="Pfam" id="PF07977">
    <property type="entry name" value="FabA"/>
    <property type="match status" value="1"/>
</dbReference>
<dbReference type="SUPFAM" id="SSF54637">
    <property type="entry name" value="Thioesterase/thiol ester dehydrase-isomerase"/>
    <property type="match status" value="1"/>
</dbReference>
<name>FABZ_LAWIP</name>
<proteinExistence type="inferred from homology"/>
<comment type="function">
    <text evidence="1">Involved in unsaturated fatty acids biosynthesis. Catalyzes the dehydration of short chain beta-hydroxyacyl-ACPs and long chain saturated and unsaturated beta-hydroxyacyl-ACPs.</text>
</comment>
<comment type="catalytic activity">
    <reaction evidence="1">
        <text>a (3R)-hydroxyacyl-[ACP] = a (2E)-enoyl-[ACP] + H2O</text>
        <dbReference type="Rhea" id="RHEA:13097"/>
        <dbReference type="Rhea" id="RHEA-COMP:9925"/>
        <dbReference type="Rhea" id="RHEA-COMP:9945"/>
        <dbReference type="ChEBI" id="CHEBI:15377"/>
        <dbReference type="ChEBI" id="CHEBI:78784"/>
        <dbReference type="ChEBI" id="CHEBI:78827"/>
        <dbReference type="EC" id="4.2.1.59"/>
    </reaction>
</comment>
<comment type="subcellular location">
    <subcellularLocation>
        <location evidence="1">Cytoplasm</location>
    </subcellularLocation>
</comment>
<comment type="similarity">
    <text evidence="1">Belongs to the thioester dehydratase family. FabZ subfamily.</text>
</comment>
<keyword id="KW-0963">Cytoplasm</keyword>
<keyword id="KW-0441">Lipid A biosynthesis</keyword>
<keyword id="KW-0444">Lipid biosynthesis</keyword>
<keyword id="KW-0443">Lipid metabolism</keyword>
<keyword id="KW-0456">Lyase</keyword>
<keyword id="KW-1185">Reference proteome</keyword>
<gene>
    <name evidence="1" type="primary">fabZ</name>
    <name type="ordered locus">LI1020</name>
</gene>
<evidence type="ECO:0000255" key="1">
    <source>
        <dbReference type="HAMAP-Rule" id="MF_00406"/>
    </source>
</evidence>
<accession>Q1MPK3</accession>
<organism>
    <name type="scientific">Lawsonia intracellularis (strain PHE/MN1-00)</name>
    <dbReference type="NCBI Taxonomy" id="363253"/>
    <lineage>
        <taxon>Bacteria</taxon>
        <taxon>Pseudomonadati</taxon>
        <taxon>Thermodesulfobacteriota</taxon>
        <taxon>Desulfovibrionia</taxon>
        <taxon>Desulfovibrionales</taxon>
        <taxon>Desulfovibrionaceae</taxon>
        <taxon>Lawsonia</taxon>
    </lineage>
</organism>
<protein>
    <recommendedName>
        <fullName evidence="1">3-hydroxyacyl-[acyl-carrier-protein] dehydratase FabZ</fullName>
        <ecNumber evidence="1">4.2.1.59</ecNumber>
    </recommendedName>
    <alternativeName>
        <fullName evidence="1">(3R)-hydroxymyristoyl-[acyl-carrier-protein] dehydratase</fullName>
        <shortName evidence="1">(3R)-hydroxymyristoyl-ACP dehydrase</shortName>
    </alternativeName>
    <alternativeName>
        <fullName evidence="1">Beta-hydroxyacyl-ACP dehydratase</fullName>
    </alternativeName>
</protein>
<reference key="1">
    <citation type="submission" date="2005-11" db="EMBL/GenBank/DDBJ databases">
        <title>The complete genome sequence of Lawsonia intracellularis: the causative agent of proliferative enteropathy.</title>
        <authorList>
            <person name="Kaur K."/>
            <person name="Zhang Q."/>
            <person name="Beckler D."/>
            <person name="Munir S."/>
            <person name="Li L."/>
            <person name="Kinsley K."/>
            <person name="Herron L."/>
            <person name="Peterson A."/>
            <person name="May B."/>
            <person name="Singh S."/>
            <person name="Gebhart C."/>
            <person name="Kapur V."/>
        </authorList>
    </citation>
    <scope>NUCLEOTIDE SEQUENCE [LARGE SCALE GENOMIC DNA]</scope>
    <source>
        <strain>PHE/MN1-00</strain>
    </source>
</reference>
<sequence>MSHPLPPNIQEILQLLPHRYPFLLVDRVIEFNAGKYIKAYKNVSINEPFFQGHFPGFPVMPGVLILEAMAQSGGITVLQSFPINELQGKVFLFAGIENVKFRQQVIPGDQLILECEIIRHKLQLWKMSCQAFVNNKLVAEAILTAAMTNKENF</sequence>